<dbReference type="EC" id="2.7.11.1"/>
<dbReference type="EMBL" id="AY292400">
    <property type="protein sequence ID" value="AAP44998.1"/>
    <property type="molecule type" value="mRNA"/>
</dbReference>
<dbReference type="EMBL" id="AY223819">
    <property type="protein sequence ID" value="AAO66474.1"/>
    <property type="molecule type" value="mRNA"/>
</dbReference>
<dbReference type="EMBL" id="AK052288">
    <property type="protein sequence ID" value="BAC34918.1"/>
    <property type="molecule type" value="mRNA"/>
</dbReference>
<dbReference type="EMBL" id="CU207394">
    <property type="status" value="NOT_ANNOTATED_CDS"/>
    <property type="molecule type" value="Genomic_DNA"/>
</dbReference>
<dbReference type="EMBL" id="CH466572">
    <property type="protein sequence ID" value="EDL10715.1"/>
    <property type="molecule type" value="Genomic_DNA"/>
</dbReference>
<dbReference type="EMBL" id="BC062170">
    <property type="protein sequence ID" value="AAH62170.1"/>
    <property type="molecule type" value="mRNA"/>
</dbReference>
<dbReference type="CCDS" id="CCDS39712.1">
    <molecule id="Q7TSE6-1"/>
</dbReference>
<dbReference type="RefSeq" id="NP_001333595.1">
    <property type="nucleotide sequence ID" value="NM_001346666.1"/>
</dbReference>
<dbReference type="RefSeq" id="NP_766322.1">
    <molecule id="Q7TSE6-1"/>
    <property type="nucleotide sequence ID" value="NM_172734.3"/>
</dbReference>
<dbReference type="RefSeq" id="XP_006507090.2">
    <molecule id="Q7TSE6-2"/>
    <property type="nucleotide sequence ID" value="XM_006507027.2"/>
</dbReference>
<dbReference type="SMR" id="Q7TSE6"/>
<dbReference type="BioGRID" id="231267">
    <property type="interactions" value="4"/>
</dbReference>
<dbReference type="FunCoup" id="Q7TSE6">
    <property type="interactions" value="2357"/>
</dbReference>
<dbReference type="IntAct" id="Q7TSE6">
    <property type="interactions" value="1"/>
</dbReference>
<dbReference type="STRING" id="10090.ENSMUSP00000001675"/>
<dbReference type="GlyGen" id="Q7TSE6">
    <property type="glycosylation" value="1 site, 1 N-linked glycan (1 site)"/>
</dbReference>
<dbReference type="iPTMnet" id="Q7TSE6"/>
<dbReference type="PhosphoSitePlus" id="Q7TSE6"/>
<dbReference type="jPOST" id="Q7TSE6"/>
<dbReference type="PaxDb" id="10090-ENSMUSP00000001675"/>
<dbReference type="PeptideAtlas" id="Q7TSE6"/>
<dbReference type="ProteomicsDB" id="257431">
    <molecule id="Q7TSE6-1"/>
</dbReference>
<dbReference type="ProteomicsDB" id="257432">
    <molecule id="Q7TSE6-2"/>
</dbReference>
<dbReference type="Pumba" id="Q7TSE6"/>
<dbReference type="Antibodypedia" id="24379">
    <property type="antibodies" value="262 antibodies from 28 providers"/>
</dbReference>
<dbReference type="DNASU" id="232533"/>
<dbReference type="Ensembl" id="ENSMUST00000001675.14">
    <molecule id="Q7TSE6-1"/>
    <property type="protein sequence ID" value="ENSMUSP00000001675.8"/>
    <property type="gene ID" value="ENSMUSG00000001630.14"/>
</dbReference>
<dbReference type="Ensembl" id="ENSMUST00000111644.2">
    <molecule id="Q7TSE6-2"/>
    <property type="protein sequence ID" value="ENSMUSP00000107271.2"/>
    <property type="gene ID" value="ENSMUSG00000001630.14"/>
</dbReference>
<dbReference type="GeneID" id="232533"/>
<dbReference type="KEGG" id="mmu:232533"/>
<dbReference type="UCSC" id="uc009esh.2">
    <molecule id="Q7TSE6-1"/>
    <property type="organism name" value="mouse"/>
</dbReference>
<dbReference type="AGR" id="MGI:1922250"/>
<dbReference type="CTD" id="23012"/>
<dbReference type="MGI" id="MGI:1922250">
    <property type="gene designation" value="Stk38l"/>
</dbReference>
<dbReference type="VEuPathDB" id="HostDB:ENSMUSG00000001630"/>
<dbReference type="eggNOG" id="KOG0605">
    <property type="taxonomic scope" value="Eukaryota"/>
</dbReference>
<dbReference type="GeneTree" id="ENSGT00940000153544"/>
<dbReference type="HOGENOM" id="CLU_000288_67_0_1"/>
<dbReference type="InParanoid" id="Q7TSE6"/>
<dbReference type="OMA" id="HDNAYYQ"/>
<dbReference type="TreeFam" id="TF105337"/>
<dbReference type="BioGRID-ORCS" id="232533">
    <property type="hits" value="3 hits in 80 CRISPR screens"/>
</dbReference>
<dbReference type="ChiTaRS" id="Stk38l">
    <property type="organism name" value="mouse"/>
</dbReference>
<dbReference type="PRO" id="PR:Q7TSE6"/>
<dbReference type="Proteomes" id="UP000000589">
    <property type="component" value="Chromosome 6"/>
</dbReference>
<dbReference type="RNAct" id="Q7TSE6">
    <property type="molecule type" value="protein"/>
</dbReference>
<dbReference type="Bgee" id="ENSMUSG00000001630">
    <property type="expression patterns" value="Expressed in ascending aorta and 208 other cell types or tissues"/>
</dbReference>
<dbReference type="ExpressionAtlas" id="Q7TSE6">
    <property type="expression patterns" value="baseline and differential"/>
</dbReference>
<dbReference type="GO" id="GO:0015629">
    <property type="term" value="C:actin cytoskeleton"/>
    <property type="evidence" value="ECO:0000314"/>
    <property type="project" value="UniProtKB"/>
</dbReference>
<dbReference type="GO" id="GO:0005737">
    <property type="term" value="C:cytoplasm"/>
    <property type="evidence" value="ECO:0000314"/>
    <property type="project" value="UniProtKB"/>
</dbReference>
<dbReference type="GO" id="GO:0005829">
    <property type="term" value="C:cytosol"/>
    <property type="evidence" value="ECO:0007669"/>
    <property type="project" value="Ensembl"/>
</dbReference>
<dbReference type="GO" id="GO:0016020">
    <property type="term" value="C:membrane"/>
    <property type="evidence" value="ECO:0007669"/>
    <property type="project" value="UniProtKB-SubCell"/>
</dbReference>
<dbReference type="GO" id="GO:0003779">
    <property type="term" value="F:actin binding"/>
    <property type="evidence" value="ECO:0007669"/>
    <property type="project" value="UniProtKB-KW"/>
</dbReference>
<dbReference type="GO" id="GO:0005524">
    <property type="term" value="F:ATP binding"/>
    <property type="evidence" value="ECO:0000250"/>
    <property type="project" value="UniProtKB"/>
</dbReference>
<dbReference type="GO" id="GO:0000287">
    <property type="term" value="F:magnesium ion binding"/>
    <property type="evidence" value="ECO:0000250"/>
    <property type="project" value="UniProtKB"/>
</dbReference>
<dbReference type="GO" id="GO:0106310">
    <property type="term" value="F:protein serine kinase activity"/>
    <property type="evidence" value="ECO:0007669"/>
    <property type="project" value="RHEA"/>
</dbReference>
<dbReference type="GO" id="GO:0004674">
    <property type="term" value="F:protein serine/threonine kinase activity"/>
    <property type="evidence" value="ECO:0000250"/>
    <property type="project" value="UniProtKB"/>
</dbReference>
<dbReference type="GO" id="GO:0035556">
    <property type="term" value="P:intracellular signal transduction"/>
    <property type="evidence" value="ECO:0000250"/>
    <property type="project" value="UniProtKB"/>
</dbReference>
<dbReference type="GO" id="GO:0010507">
    <property type="term" value="P:negative regulation of autophagy"/>
    <property type="evidence" value="ECO:0007669"/>
    <property type="project" value="Ensembl"/>
</dbReference>
<dbReference type="GO" id="GO:0006468">
    <property type="term" value="P:protein phosphorylation"/>
    <property type="evidence" value="ECO:0000250"/>
    <property type="project" value="UniProtKB"/>
</dbReference>
<dbReference type="GO" id="GO:0051128">
    <property type="term" value="P:regulation of cellular component organization"/>
    <property type="evidence" value="ECO:0000314"/>
    <property type="project" value="UniProtKB"/>
</dbReference>
<dbReference type="CDD" id="cd05627">
    <property type="entry name" value="STKc_NDR2"/>
    <property type="match status" value="1"/>
</dbReference>
<dbReference type="FunFam" id="1.10.510.10:FF:000057">
    <property type="entry name" value="Non-specific serine/threonine protein kinase"/>
    <property type="match status" value="1"/>
</dbReference>
<dbReference type="FunFam" id="1.10.510.10:FF:000086">
    <property type="entry name" value="Non-specific serine/threonine protein kinase"/>
    <property type="match status" value="1"/>
</dbReference>
<dbReference type="FunFam" id="3.30.200.20:FF:000118">
    <property type="entry name" value="Non-specific serine/threonine protein kinase"/>
    <property type="match status" value="1"/>
</dbReference>
<dbReference type="Gene3D" id="3.30.200.20">
    <property type="entry name" value="Phosphorylase Kinase, domain 1"/>
    <property type="match status" value="1"/>
</dbReference>
<dbReference type="Gene3D" id="1.10.510.10">
    <property type="entry name" value="Transferase(Phosphotransferase) domain 1"/>
    <property type="match status" value="2"/>
</dbReference>
<dbReference type="InterPro" id="IPR000961">
    <property type="entry name" value="AGC-kinase_C"/>
</dbReference>
<dbReference type="InterPro" id="IPR011009">
    <property type="entry name" value="Kinase-like_dom_sf"/>
</dbReference>
<dbReference type="InterPro" id="IPR017892">
    <property type="entry name" value="Pkinase_C"/>
</dbReference>
<dbReference type="InterPro" id="IPR000719">
    <property type="entry name" value="Prot_kinase_dom"/>
</dbReference>
<dbReference type="InterPro" id="IPR017441">
    <property type="entry name" value="Protein_kinase_ATP_BS"/>
</dbReference>
<dbReference type="InterPro" id="IPR050839">
    <property type="entry name" value="Rho-assoc_Ser/Thr_Kinase"/>
</dbReference>
<dbReference type="InterPro" id="IPR008271">
    <property type="entry name" value="Ser/Thr_kinase_AS"/>
</dbReference>
<dbReference type="PANTHER" id="PTHR22988:SF76">
    <property type="entry name" value="CHROMOSOME UNDETERMINED SCAFFOLD_135, WHOLE GENOME SHOTGUN SEQUENCE"/>
    <property type="match status" value="1"/>
</dbReference>
<dbReference type="PANTHER" id="PTHR22988">
    <property type="entry name" value="MYOTONIC DYSTROPHY S/T KINASE-RELATED"/>
    <property type="match status" value="1"/>
</dbReference>
<dbReference type="Pfam" id="PF00069">
    <property type="entry name" value="Pkinase"/>
    <property type="match status" value="1"/>
</dbReference>
<dbReference type="Pfam" id="PF00433">
    <property type="entry name" value="Pkinase_C"/>
    <property type="match status" value="1"/>
</dbReference>
<dbReference type="SMART" id="SM00220">
    <property type="entry name" value="S_TKc"/>
    <property type="match status" value="1"/>
</dbReference>
<dbReference type="SUPFAM" id="SSF56112">
    <property type="entry name" value="Protein kinase-like (PK-like)"/>
    <property type="match status" value="1"/>
</dbReference>
<dbReference type="PROSITE" id="PS51285">
    <property type="entry name" value="AGC_KINASE_CTER"/>
    <property type="match status" value="1"/>
</dbReference>
<dbReference type="PROSITE" id="PS00107">
    <property type="entry name" value="PROTEIN_KINASE_ATP"/>
    <property type="match status" value="1"/>
</dbReference>
<dbReference type="PROSITE" id="PS50011">
    <property type="entry name" value="PROTEIN_KINASE_DOM"/>
    <property type="match status" value="1"/>
</dbReference>
<dbReference type="PROSITE" id="PS00108">
    <property type="entry name" value="PROTEIN_KINASE_ST"/>
    <property type="match status" value="1"/>
</dbReference>
<feature type="initiator methionine" description="Removed" evidence="3">
    <location>
        <position position="1"/>
    </location>
</feature>
<feature type="chain" id="PRO_0000086721" description="Serine/threonine-protein kinase 38-like">
    <location>
        <begin position="2"/>
        <end position="464"/>
    </location>
</feature>
<feature type="domain" description="Protein kinase" evidence="4">
    <location>
        <begin position="90"/>
        <end position="383"/>
    </location>
</feature>
<feature type="domain" description="AGC-kinase C-terminal" evidence="5">
    <location>
        <begin position="384"/>
        <end position="453"/>
    </location>
</feature>
<feature type="region of interest" description="S100B binding" evidence="1">
    <location>
        <begin position="64"/>
        <end position="89"/>
    </location>
</feature>
<feature type="active site" description="Proton acceptor" evidence="4 6">
    <location>
        <position position="213"/>
    </location>
</feature>
<feature type="binding site" evidence="2 4">
    <location>
        <begin position="96"/>
        <end position="104"/>
    </location>
    <ligand>
        <name>ATP</name>
        <dbReference type="ChEBI" id="CHEBI:30616"/>
    </ligand>
</feature>
<feature type="binding site" evidence="3 4">
    <location>
        <position position="119"/>
    </location>
    <ligand>
        <name>ATP</name>
        <dbReference type="ChEBI" id="CHEBI:30616"/>
    </ligand>
</feature>
<feature type="modified residue" description="N-acetylalanine" evidence="3">
    <location>
        <position position="2"/>
    </location>
</feature>
<feature type="modified residue" description="Phosphothreonine" evidence="3">
    <location>
        <position position="75"/>
    </location>
</feature>
<feature type="modified residue" description="Phosphoserine; by autocatalysis" evidence="3">
    <location>
        <position position="282"/>
    </location>
</feature>
<feature type="modified residue" description="Phosphothreonine; by STK24/MST3" evidence="3">
    <location>
        <position position="442"/>
    </location>
</feature>
<feature type="splice variant" id="VSP_012334" description="In isoform 2." evidence="11">
    <original>V</original>
    <variation>VAFFLFLV</variation>
    <location>
        <position position="423"/>
    </location>
</feature>
<feature type="sequence conflict" description="In Ref. 1; AAP44998." evidence="12" ref="1">
    <original>G</original>
    <variation>A</variation>
    <location>
        <position position="97"/>
    </location>
</feature>
<keyword id="KW-0007">Acetylation</keyword>
<keyword id="KW-0009">Actin-binding</keyword>
<keyword id="KW-0025">Alternative splicing</keyword>
<keyword id="KW-0067">ATP-binding</keyword>
<keyword id="KW-0963">Cytoplasm</keyword>
<keyword id="KW-0206">Cytoskeleton</keyword>
<keyword id="KW-0418">Kinase</keyword>
<keyword id="KW-0460">Magnesium</keyword>
<keyword id="KW-0472">Membrane</keyword>
<keyword id="KW-0479">Metal-binding</keyword>
<keyword id="KW-0547">Nucleotide-binding</keyword>
<keyword id="KW-0597">Phosphoprotein</keyword>
<keyword id="KW-1185">Reference proteome</keyword>
<keyword id="KW-0723">Serine/threonine-protein kinase</keyword>
<keyword id="KW-0808">Transferase</keyword>
<reference evidence="12 15" key="1">
    <citation type="journal article" date="2004" name="J. Biol. Chem.">
        <title>Regulation of NDR2 protein kinase by multi-site phosphorylation and the S100B calcium-binding protein.</title>
        <authorList>
            <person name="Stegert M.R."/>
            <person name="Tamaskovic R."/>
            <person name="Bichsel S.J."/>
            <person name="Hergovich A."/>
            <person name="Hemmings B.A."/>
        </authorList>
    </citation>
    <scope>NUCLEOTIDE SEQUENCE [MRNA] (ISOFORM 1)</scope>
    <scope>TISSUE SPECIFICITY</scope>
    <source>
        <strain evidence="15">C57BL/6J</strain>
        <tissue evidence="15">Brain</tissue>
    </source>
</reference>
<reference evidence="12 14" key="2">
    <citation type="journal article" date="2004" name="J. Biol. Chem.">
        <title>Neuronal functions of the novel serine/threonine kinase Ndr2.</title>
        <authorList>
            <person name="Stork O."/>
            <person name="Zhdanov A."/>
            <person name="Kudersky A."/>
            <person name="Yoshikawa T."/>
            <person name="Obata K."/>
            <person name="Pape H.-C."/>
        </authorList>
    </citation>
    <scope>NUCLEOTIDE SEQUENCE [MRNA] (ISOFORM 1)</scope>
    <scope>FUNCTION</scope>
    <scope>SUBCELLULAR LOCATION</scope>
    <scope>TISSUE SPECIFICITY</scope>
    <source>
        <strain evidence="14">C57BL/6J</strain>
        <tissue evidence="14">Basophil</tissue>
    </source>
</reference>
<reference key="3">
    <citation type="journal article" date="2005" name="Science">
        <title>The transcriptional landscape of the mammalian genome.</title>
        <authorList>
            <person name="Carninci P."/>
            <person name="Kasukawa T."/>
            <person name="Katayama S."/>
            <person name="Gough J."/>
            <person name="Frith M.C."/>
            <person name="Maeda N."/>
            <person name="Oyama R."/>
            <person name="Ravasi T."/>
            <person name="Lenhard B."/>
            <person name="Wells C."/>
            <person name="Kodzius R."/>
            <person name="Shimokawa K."/>
            <person name="Bajic V.B."/>
            <person name="Brenner S.E."/>
            <person name="Batalov S."/>
            <person name="Forrest A.R."/>
            <person name="Zavolan M."/>
            <person name="Davis M.J."/>
            <person name="Wilming L.G."/>
            <person name="Aidinis V."/>
            <person name="Allen J.E."/>
            <person name="Ambesi-Impiombato A."/>
            <person name="Apweiler R."/>
            <person name="Aturaliya R.N."/>
            <person name="Bailey T.L."/>
            <person name="Bansal M."/>
            <person name="Baxter L."/>
            <person name="Beisel K.W."/>
            <person name="Bersano T."/>
            <person name="Bono H."/>
            <person name="Chalk A.M."/>
            <person name="Chiu K.P."/>
            <person name="Choudhary V."/>
            <person name="Christoffels A."/>
            <person name="Clutterbuck D.R."/>
            <person name="Crowe M.L."/>
            <person name="Dalla E."/>
            <person name="Dalrymple B.P."/>
            <person name="de Bono B."/>
            <person name="Della Gatta G."/>
            <person name="di Bernardo D."/>
            <person name="Down T."/>
            <person name="Engstrom P."/>
            <person name="Fagiolini M."/>
            <person name="Faulkner G."/>
            <person name="Fletcher C.F."/>
            <person name="Fukushima T."/>
            <person name="Furuno M."/>
            <person name="Futaki S."/>
            <person name="Gariboldi M."/>
            <person name="Georgii-Hemming P."/>
            <person name="Gingeras T.R."/>
            <person name="Gojobori T."/>
            <person name="Green R.E."/>
            <person name="Gustincich S."/>
            <person name="Harbers M."/>
            <person name="Hayashi Y."/>
            <person name="Hensch T.K."/>
            <person name="Hirokawa N."/>
            <person name="Hill D."/>
            <person name="Huminiecki L."/>
            <person name="Iacono M."/>
            <person name="Ikeo K."/>
            <person name="Iwama A."/>
            <person name="Ishikawa T."/>
            <person name="Jakt M."/>
            <person name="Kanapin A."/>
            <person name="Katoh M."/>
            <person name="Kawasawa Y."/>
            <person name="Kelso J."/>
            <person name="Kitamura H."/>
            <person name="Kitano H."/>
            <person name="Kollias G."/>
            <person name="Krishnan S.P."/>
            <person name="Kruger A."/>
            <person name="Kummerfeld S.K."/>
            <person name="Kurochkin I.V."/>
            <person name="Lareau L.F."/>
            <person name="Lazarevic D."/>
            <person name="Lipovich L."/>
            <person name="Liu J."/>
            <person name="Liuni S."/>
            <person name="McWilliam S."/>
            <person name="Madan Babu M."/>
            <person name="Madera M."/>
            <person name="Marchionni L."/>
            <person name="Matsuda H."/>
            <person name="Matsuzawa S."/>
            <person name="Miki H."/>
            <person name="Mignone F."/>
            <person name="Miyake S."/>
            <person name="Morris K."/>
            <person name="Mottagui-Tabar S."/>
            <person name="Mulder N."/>
            <person name="Nakano N."/>
            <person name="Nakauchi H."/>
            <person name="Ng P."/>
            <person name="Nilsson R."/>
            <person name="Nishiguchi S."/>
            <person name="Nishikawa S."/>
            <person name="Nori F."/>
            <person name="Ohara O."/>
            <person name="Okazaki Y."/>
            <person name="Orlando V."/>
            <person name="Pang K.C."/>
            <person name="Pavan W.J."/>
            <person name="Pavesi G."/>
            <person name="Pesole G."/>
            <person name="Petrovsky N."/>
            <person name="Piazza S."/>
            <person name="Reed J."/>
            <person name="Reid J.F."/>
            <person name="Ring B.Z."/>
            <person name="Ringwald M."/>
            <person name="Rost B."/>
            <person name="Ruan Y."/>
            <person name="Salzberg S.L."/>
            <person name="Sandelin A."/>
            <person name="Schneider C."/>
            <person name="Schoenbach C."/>
            <person name="Sekiguchi K."/>
            <person name="Semple C.A."/>
            <person name="Seno S."/>
            <person name="Sessa L."/>
            <person name="Sheng Y."/>
            <person name="Shibata Y."/>
            <person name="Shimada H."/>
            <person name="Shimada K."/>
            <person name="Silva D."/>
            <person name="Sinclair B."/>
            <person name="Sperling S."/>
            <person name="Stupka E."/>
            <person name="Sugiura K."/>
            <person name="Sultana R."/>
            <person name="Takenaka Y."/>
            <person name="Taki K."/>
            <person name="Tammoja K."/>
            <person name="Tan S.L."/>
            <person name="Tang S."/>
            <person name="Taylor M.S."/>
            <person name="Tegner J."/>
            <person name="Teichmann S.A."/>
            <person name="Ueda H.R."/>
            <person name="van Nimwegen E."/>
            <person name="Verardo R."/>
            <person name="Wei C.L."/>
            <person name="Yagi K."/>
            <person name="Yamanishi H."/>
            <person name="Zabarovsky E."/>
            <person name="Zhu S."/>
            <person name="Zimmer A."/>
            <person name="Hide W."/>
            <person name="Bult C."/>
            <person name="Grimmond S.M."/>
            <person name="Teasdale R.D."/>
            <person name="Liu E.T."/>
            <person name="Brusic V."/>
            <person name="Quackenbush J."/>
            <person name="Wahlestedt C."/>
            <person name="Mattick J.S."/>
            <person name="Hume D.A."/>
            <person name="Kai C."/>
            <person name="Sasaki D."/>
            <person name="Tomaru Y."/>
            <person name="Fukuda S."/>
            <person name="Kanamori-Katayama M."/>
            <person name="Suzuki M."/>
            <person name="Aoki J."/>
            <person name="Arakawa T."/>
            <person name="Iida J."/>
            <person name="Imamura K."/>
            <person name="Itoh M."/>
            <person name="Kato T."/>
            <person name="Kawaji H."/>
            <person name="Kawagashira N."/>
            <person name="Kawashima T."/>
            <person name="Kojima M."/>
            <person name="Kondo S."/>
            <person name="Konno H."/>
            <person name="Nakano K."/>
            <person name="Ninomiya N."/>
            <person name="Nishio T."/>
            <person name="Okada M."/>
            <person name="Plessy C."/>
            <person name="Shibata K."/>
            <person name="Shiraki T."/>
            <person name="Suzuki S."/>
            <person name="Tagami M."/>
            <person name="Waki K."/>
            <person name="Watahiki A."/>
            <person name="Okamura-Oho Y."/>
            <person name="Suzuki H."/>
            <person name="Kawai J."/>
            <person name="Hayashizaki Y."/>
        </authorList>
    </citation>
    <scope>NUCLEOTIDE SEQUENCE [LARGE SCALE MRNA] (ISOFORM 1)</scope>
    <source>
        <strain>C57BL/6J</strain>
        <tissue>Fetal heart</tissue>
    </source>
</reference>
<reference key="4">
    <citation type="journal article" date="2009" name="PLoS Biol.">
        <title>Lineage-specific biology revealed by a finished genome assembly of the mouse.</title>
        <authorList>
            <person name="Church D.M."/>
            <person name="Goodstadt L."/>
            <person name="Hillier L.W."/>
            <person name="Zody M.C."/>
            <person name="Goldstein S."/>
            <person name="She X."/>
            <person name="Bult C.J."/>
            <person name="Agarwala R."/>
            <person name="Cherry J.L."/>
            <person name="DiCuccio M."/>
            <person name="Hlavina W."/>
            <person name="Kapustin Y."/>
            <person name="Meric P."/>
            <person name="Maglott D."/>
            <person name="Birtle Z."/>
            <person name="Marques A.C."/>
            <person name="Graves T."/>
            <person name="Zhou S."/>
            <person name="Teague B."/>
            <person name="Potamousis K."/>
            <person name="Churas C."/>
            <person name="Place M."/>
            <person name="Herschleb J."/>
            <person name="Runnheim R."/>
            <person name="Forrest D."/>
            <person name="Amos-Landgraf J."/>
            <person name="Schwartz D.C."/>
            <person name="Cheng Z."/>
            <person name="Lindblad-Toh K."/>
            <person name="Eichler E.E."/>
            <person name="Ponting C.P."/>
        </authorList>
    </citation>
    <scope>NUCLEOTIDE SEQUENCE [LARGE SCALE GENOMIC DNA]</scope>
    <source>
        <strain>C57BL/6J</strain>
    </source>
</reference>
<reference key="5">
    <citation type="submission" date="2005-07" db="EMBL/GenBank/DDBJ databases">
        <authorList>
            <person name="Mural R.J."/>
            <person name="Adams M.D."/>
            <person name="Myers E.W."/>
            <person name="Smith H.O."/>
            <person name="Venter J.C."/>
        </authorList>
    </citation>
    <scope>NUCLEOTIDE SEQUENCE [LARGE SCALE GENOMIC DNA]</scope>
</reference>
<reference evidence="13" key="6">
    <citation type="journal article" date="2004" name="Genome Res.">
        <title>The status, quality, and expansion of the NIH full-length cDNA project: the Mammalian Gene Collection (MGC).</title>
        <authorList>
            <consortium name="The MGC Project Team"/>
        </authorList>
    </citation>
    <scope>NUCLEOTIDE SEQUENCE [LARGE SCALE MRNA] (ISOFORM 2)</scope>
    <source>
        <tissue evidence="13">Fetal jaw</tissue>
        <tissue evidence="13">Fetal limb</tissue>
    </source>
</reference>
<reference key="7">
    <citation type="journal article" date="2010" name="Cell">
        <title>A tissue-specific atlas of mouse protein phosphorylation and expression.</title>
        <authorList>
            <person name="Huttlin E.L."/>
            <person name="Jedrychowski M.P."/>
            <person name="Elias J.E."/>
            <person name="Goswami T."/>
            <person name="Rad R."/>
            <person name="Beausoleil S.A."/>
            <person name="Villen J."/>
            <person name="Haas W."/>
            <person name="Sowa M.E."/>
            <person name="Gygi S.P."/>
        </authorList>
    </citation>
    <scope>IDENTIFICATION BY MASS SPECTROMETRY [LARGE SCALE ANALYSIS]</scope>
    <source>
        <tissue>Brain</tissue>
        <tissue>Kidney</tissue>
        <tissue>Pancreas</tissue>
    </source>
</reference>
<reference key="8">
    <citation type="journal article" date="2011" name="Mol. Cell. Biol.">
        <title>MICAL-1 is a negative regulator of MST-NDR kinase signaling and apoptosis.</title>
        <authorList>
            <person name="Zhou Y."/>
            <person name="Adolfs Y."/>
            <person name="Pijnappel W.W."/>
            <person name="Fuller S.J."/>
            <person name="Van der Schors R.C."/>
            <person name="Li K.W."/>
            <person name="Sugden P.H."/>
            <person name="Smit A.B."/>
            <person name="Hergovich A."/>
            <person name="Pasterkamp R.J."/>
        </authorList>
    </citation>
    <scope>FUNCTION</scope>
    <scope>INTERACTION WITH MICAL1</scope>
</reference>
<organism>
    <name type="scientific">Mus musculus</name>
    <name type="common">Mouse</name>
    <dbReference type="NCBI Taxonomy" id="10090"/>
    <lineage>
        <taxon>Eukaryota</taxon>
        <taxon>Metazoa</taxon>
        <taxon>Chordata</taxon>
        <taxon>Craniata</taxon>
        <taxon>Vertebrata</taxon>
        <taxon>Euteleostomi</taxon>
        <taxon>Mammalia</taxon>
        <taxon>Eutheria</taxon>
        <taxon>Euarchontoglires</taxon>
        <taxon>Glires</taxon>
        <taxon>Rodentia</taxon>
        <taxon>Myomorpha</taxon>
        <taxon>Muroidea</taxon>
        <taxon>Muridae</taxon>
        <taxon>Murinae</taxon>
        <taxon>Mus</taxon>
        <taxon>Mus</taxon>
    </lineage>
</organism>
<proteinExistence type="evidence at protein level"/>
<sequence length="464" mass="53772">MAMTAGATTTFPMSNHTRERVTVAKLTLENFYSNLILQHEERETRQKKLEVAMEEEGLADEEKKLRRSQHARKETEFLRLKRTRLGLDDFESLKVIGRGAFGEVRLVQKKDTGHIYAMKILRKADMLEKEQVAHIRAERDILVEADGAWVVKMFYSFQDKRNLYLIMEFLPGGDMMTLLMKKDTLTEEETQFYISETVLAIDAIHQLGFIHRDVKPDNLLLDAKGHVKLSDFGLCTGLKKAHRTEFYRNLTHNPPSDFSFQNMNSKRKAETWKKNRRQLAYSTVGTPDYIAPEVFMQTGYNKLCDWWSLGVIMYEMLIGFPPFCSETPQETYRKVMSWKETLAFPPEVPVSEKAKDLILRFCTDSENRIGNGGVEEIKGHPFFEGVDWGHIRERPAAIPIEIRSIDDTSNFDDFPESDILQPVPNTTEPDYKSKDWVFLNYTYKRFEGLTQRGSIPTYMKAGKL</sequence>
<evidence type="ECO:0000250" key="1"/>
<evidence type="ECO:0000250" key="2">
    <source>
        <dbReference type="UniProtKB" id="O95835"/>
    </source>
</evidence>
<evidence type="ECO:0000250" key="3">
    <source>
        <dbReference type="UniProtKB" id="Q9Y2H1"/>
    </source>
</evidence>
<evidence type="ECO:0000255" key="4">
    <source>
        <dbReference type="PROSITE-ProRule" id="PRU00159"/>
    </source>
</evidence>
<evidence type="ECO:0000255" key="5">
    <source>
        <dbReference type="PROSITE-ProRule" id="PRU00618"/>
    </source>
</evidence>
<evidence type="ECO:0000255" key="6">
    <source>
        <dbReference type="PROSITE-ProRule" id="PRU10027"/>
    </source>
</evidence>
<evidence type="ECO:0000269" key="7">
    <source>
    </source>
</evidence>
<evidence type="ECO:0000269" key="8">
    <source>
    </source>
</evidence>
<evidence type="ECO:0000269" key="9">
    <source>
    </source>
</evidence>
<evidence type="ECO:0000303" key="10">
    <source>
    </source>
</evidence>
<evidence type="ECO:0000303" key="11">
    <source>
    </source>
</evidence>
<evidence type="ECO:0000305" key="12"/>
<evidence type="ECO:0000312" key="13">
    <source>
        <dbReference type="EMBL" id="AAH62170.1"/>
    </source>
</evidence>
<evidence type="ECO:0000312" key="14">
    <source>
        <dbReference type="EMBL" id="AAO66474.1"/>
    </source>
</evidence>
<evidence type="ECO:0000312" key="15">
    <source>
        <dbReference type="EMBL" id="AAP44998.1"/>
    </source>
</evidence>
<comment type="function">
    <text evidence="8 9">Involved in the regulation of structural processes in differentiating and mature neuronal cells.</text>
</comment>
<comment type="catalytic activity">
    <reaction>
        <text>L-seryl-[protein] + ATP = O-phospho-L-seryl-[protein] + ADP + H(+)</text>
        <dbReference type="Rhea" id="RHEA:17989"/>
        <dbReference type="Rhea" id="RHEA-COMP:9863"/>
        <dbReference type="Rhea" id="RHEA-COMP:11604"/>
        <dbReference type="ChEBI" id="CHEBI:15378"/>
        <dbReference type="ChEBI" id="CHEBI:29999"/>
        <dbReference type="ChEBI" id="CHEBI:30616"/>
        <dbReference type="ChEBI" id="CHEBI:83421"/>
        <dbReference type="ChEBI" id="CHEBI:456216"/>
        <dbReference type="EC" id="2.7.11.1"/>
    </reaction>
</comment>
<comment type="catalytic activity">
    <reaction>
        <text>L-threonyl-[protein] + ATP = O-phospho-L-threonyl-[protein] + ADP + H(+)</text>
        <dbReference type="Rhea" id="RHEA:46608"/>
        <dbReference type="Rhea" id="RHEA-COMP:11060"/>
        <dbReference type="Rhea" id="RHEA-COMP:11605"/>
        <dbReference type="ChEBI" id="CHEBI:15378"/>
        <dbReference type="ChEBI" id="CHEBI:30013"/>
        <dbReference type="ChEBI" id="CHEBI:30616"/>
        <dbReference type="ChEBI" id="CHEBI:61977"/>
        <dbReference type="ChEBI" id="CHEBI:456216"/>
        <dbReference type="EC" id="2.7.11.1"/>
    </reaction>
</comment>
<comment type="cofactor">
    <cofactor evidence="1">
        <name>Mg(2+)</name>
        <dbReference type="ChEBI" id="CHEBI:18420"/>
    </cofactor>
</comment>
<comment type="activity regulation">
    <text evidence="1">Activated by binding of S100B which releases autoinhibitory N-lobe interactions, enabling ATP to bind and the autophosphorylation of Ser-282. Thr-442 then undergoes calcium-dependent phosphorylation by STK24/MST3. Interactions between phosphorylated Thr-442 and the N-lobe promote additional structural changes that complete the activation of the kinase. Autoinhibition is also released by the binding of MOB1/MOBKL1A and MOB2 to the N-terminal of STK38L (By similarity).</text>
</comment>
<comment type="subunit">
    <text evidence="1 9">Homodimeric S100B binds two molecules of STK38L. Interacts with MOB1 and MOB2 (By similarity). Interacts with MICAL1; leading to inhibit the protein kinase activity by antagonizing activation by MST1/STK4.</text>
</comment>
<comment type="subcellular location">
    <subcellularLocation>
        <location evidence="8">Cytoplasm</location>
    </subcellularLocation>
    <subcellularLocation>
        <location evidence="8">Cytoplasm</location>
        <location evidence="8">Cytoskeleton</location>
    </subcellularLocation>
    <subcellularLocation>
        <location evidence="8">Membrane</location>
    </subcellularLocation>
    <text>Associated with the actin cytoskeleton. Co-localizes with STK24/MST3 in the membrane.</text>
</comment>
<comment type="alternative products">
    <event type="alternative splicing"/>
    <isoform>
        <id>Q7TSE6-1</id>
        <name>1</name>
        <sequence type="displayed"/>
    </isoform>
    <isoform>
        <id>Q7TSE6-2</id>
        <name>2</name>
        <sequence type="described" ref="VSP_012334"/>
    </isoform>
</comment>
<comment type="tissue specificity">
    <text evidence="7 8">Highly expressed in the large and small intestine, stomach and testis. High levels also present in the brain, in particular the neurocortex, basal forebrain, hippocampus, the amygdala, cerebellum and brainstem.</text>
</comment>
<comment type="similarity">
    <text evidence="12">Belongs to the protein kinase superfamily. AGC Ser/Thr protein kinase family.</text>
</comment>
<gene>
    <name evidence="15" type="primary">Stk38l</name>
    <name evidence="10" type="synonym">Ndr2</name>
</gene>
<name>ST38L_MOUSE</name>
<accession>Q7TSE6</accession>
<accession>B2KFR4</accession>
<accession>Q6P6K6</accession>
<accession>Q8BWK4</accession>
<protein>
    <recommendedName>
        <fullName>Serine/threonine-protein kinase 38-like</fullName>
        <ecNumber>2.7.11.1</ecNumber>
    </recommendedName>
    <alternativeName>
        <fullName>NDR2 protein kinase</fullName>
    </alternativeName>
    <alternativeName>
        <fullName>Nuclear Dbf2-related kinase 2</fullName>
    </alternativeName>
</protein>